<accession>Q8TD20</accession>
<accession>B3KV17</accession>
<accession>Q7Z6U3</accession>
<accession>Q96MR8</accession>
<evidence type="ECO:0000250" key="1">
    <source>
        <dbReference type="UniProtKB" id="Q5J316"/>
    </source>
</evidence>
<evidence type="ECO:0000250" key="2">
    <source>
        <dbReference type="UniProtKB" id="Q8BFW9"/>
    </source>
</evidence>
<evidence type="ECO:0000255" key="3"/>
<evidence type="ECO:0000256" key="4">
    <source>
        <dbReference type="SAM" id="MobiDB-lite"/>
    </source>
</evidence>
<evidence type="ECO:0000269" key="5">
    <source>
    </source>
</evidence>
<evidence type="ECO:0000303" key="6">
    <source>
    </source>
</evidence>
<evidence type="ECO:0000305" key="7"/>
<evidence type="ECO:0000312" key="8">
    <source>
        <dbReference type="HGNC" id="HGNC:18067"/>
    </source>
</evidence>
<organism>
    <name type="scientific">Homo sapiens</name>
    <name type="common">Human</name>
    <dbReference type="NCBI Taxonomy" id="9606"/>
    <lineage>
        <taxon>Eukaryota</taxon>
        <taxon>Metazoa</taxon>
        <taxon>Chordata</taxon>
        <taxon>Craniata</taxon>
        <taxon>Vertebrata</taxon>
        <taxon>Euteleostomi</taxon>
        <taxon>Mammalia</taxon>
        <taxon>Eutheria</taxon>
        <taxon>Euarchontoglires</taxon>
        <taxon>Primates</taxon>
        <taxon>Haplorrhini</taxon>
        <taxon>Catarrhini</taxon>
        <taxon>Hominidae</taxon>
        <taxon>Homo</taxon>
    </lineage>
</organism>
<proteinExistence type="evidence at protein level"/>
<gene>
    <name evidence="8" type="primary">SLC2A12</name>
    <name evidence="6" type="synonym">GLUT12</name>
</gene>
<comment type="function">
    <text evidence="2">Insulin-independent facilitative glucose transporter.</text>
</comment>
<comment type="catalytic activity">
    <reaction evidence="2">
        <text>D-glucose(out) = D-glucose(in)</text>
        <dbReference type="Rhea" id="RHEA:60376"/>
        <dbReference type="ChEBI" id="CHEBI:4167"/>
    </reaction>
</comment>
<comment type="subcellular location">
    <subcellularLocation>
        <location evidence="2">Cell membrane</location>
        <topology evidence="3">Multi-pass membrane protein</topology>
    </subcellularLocation>
    <subcellularLocation>
        <location evidence="1">Endomembrane system</location>
        <topology evidence="3">Multi-pass membrane protein</topology>
    </subcellularLocation>
    <subcellularLocation>
        <location evidence="5">Cytoplasm</location>
        <location evidence="5">Perinuclear region</location>
    </subcellularLocation>
    <text evidence="5">Localizes primarily perinuclear region in the absence of insulin.</text>
</comment>
<comment type="tissue specificity">
    <text evidence="5">Predominantly expressed in skeletal muscle, heart and prostate, with lower levels in brain, placenta and kidney.</text>
</comment>
<comment type="similarity">
    <text evidence="7">Belongs to the major facilitator superfamily. Sugar transporter (TC 2.A.1.1) family. Glucose transporter subfamily.</text>
</comment>
<comment type="sequence caution" evidence="7">
    <conflict type="erroneous initiation">
        <sequence resource="EMBL-CDS" id="BAB71214"/>
    </conflict>
</comment>
<dbReference type="EMBL" id="AY046419">
    <property type="protein sequence ID" value="AAL02327.1"/>
    <property type="molecule type" value="mRNA"/>
</dbReference>
<dbReference type="EMBL" id="AK056554">
    <property type="protein sequence ID" value="BAB71214.1"/>
    <property type="status" value="ALT_INIT"/>
    <property type="molecule type" value="mRNA"/>
</dbReference>
<dbReference type="EMBL" id="AK122628">
    <property type="protein sequence ID" value="BAG53629.1"/>
    <property type="molecule type" value="mRNA"/>
</dbReference>
<dbReference type="EMBL" id="AL035699">
    <property type="status" value="NOT_ANNOTATED_CDS"/>
    <property type="molecule type" value="Genomic_DNA"/>
</dbReference>
<dbReference type="EMBL" id="AL449363">
    <property type="status" value="NOT_ANNOTATED_CDS"/>
    <property type="molecule type" value="Genomic_DNA"/>
</dbReference>
<dbReference type="EMBL" id="CH471051">
    <property type="protein sequence ID" value="EAW47994.1"/>
    <property type="molecule type" value="Genomic_DNA"/>
</dbReference>
<dbReference type="EMBL" id="BC070149">
    <property type="protein sequence ID" value="AAH70149.1"/>
    <property type="molecule type" value="mRNA"/>
</dbReference>
<dbReference type="CCDS" id="CCDS5169.1"/>
<dbReference type="RefSeq" id="NP_660159.1">
    <property type="nucleotide sequence ID" value="NM_145176.3"/>
</dbReference>
<dbReference type="SMR" id="Q8TD20"/>
<dbReference type="BioGRID" id="127535">
    <property type="interactions" value="76"/>
</dbReference>
<dbReference type="FunCoup" id="Q8TD20">
    <property type="interactions" value="407"/>
</dbReference>
<dbReference type="IntAct" id="Q8TD20">
    <property type="interactions" value="65"/>
</dbReference>
<dbReference type="STRING" id="9606.ENSP00000275230"/>
<dbReference type="DrugBank" id="DB01914">
    <property type="generic name" value="D-glucose"/>
</dbReference>
<dbReference type="DrugBank" id="DB09341">
    <property type="generic name" value="Dextrose, unspecified form"/>
</dbReference>
<dbReference type="DrugBank" id="DB09502">
    <property type="generic name" value="Fludeoxyglucose (18F)"/>
</dbReference>
<dbReference type="TCDB" id="2.A.1.1.87">
    <property type="family name" value="the major facilitator superfamily (mfs)"/>
</dbReference>
<dbReference type="GlyCosmos" id="Q8TD20">
    <property type="glycosylation" value="4 sites, No reported glycans"/>
</dbReference>
<dbReference type="GlyGen" id="Q8TD20">
    <property type="glycosylation" value="9 sites, 1 O-linked glycan (5 sites)"/>
</dbReference>
<dbReference type="iPTMnet" id="Q8TD20"/>
<dbReference type="PhosphoSitePlus" id="Q8TD20"/>
<dbReference type="SwissPalm" id="Q8TD20"/>
<dbReference type="BioMuta" id="SLC2A12"/>
<dbReference type="DMDM" id="74762615"/>
<dbReference type="CPTAC" id="CPTAC-2738"/>
<dbReference type="jPOST" id="Q8TD20"/>
<dbReference type="MassIVE" id="Q8TD20"/>
<dbReference type="PaxDb" id="9606-ENSP00000275230"/>
<dbReference type="PeptideAtlas" id="Q8TD20"/>
<dbReference type="ProteomicsDB" id="74220"/>
<dbReference type="Antibodypedia" id="32959">
    <property type="antibodies" value="124 antibodies from 24 providers"/>
</dbReference>
<dbReference type="DNASU" id="154091"/>
<dbReference type="Ensembl" id="ENST00000275230.6">
    <property type="protein sequence ID" value="ENSP00000275230.5"/>
    <property type="gene ID" value="ENSG00000146411.6"/>
</dbReference>
<dbReference type="GeneID" id="154091"/>
<dbReference type="KEGG" id="hsa:154091"/>
<dbReference type="MANE-Select" id="ENST00000275230.6">
    <property type="protein sequence ID" value="ENSP00000275230.5"/>
    <property type="RefSeq nucleotide sequence ID" value="NM_145176.3"/>
    <property type="RefSeq protein sequence ID" value="NP_660159.1"/>
</dbReference>
<dbReference type="UCSC" id="uc003qem.2">
    <property type="organism name" value="human"/>
</dbReference>
<dbReference type="AGR" id="HGNC:18067"/>
<dbReference type="CTD" id="154091"/>
<dbReference type="DisGeNET" id="154091"/>
<dbReference type="GeneCards" id="SLC2A12"/>
<dbReference type="HGNC" id="HGNC:18067">
    <property type="gene designation" value="SLC2A12"/>
</dbReference>
<dbReference type="HPA" id="ENSG00000146411">
    <property type="expression patterns" value="Tissue enriched (choroid)"/>
</dbReference>
<dbReference type="MIM" id="610372">
    <property type="type" value="gene"/>
</dbReference>
<dbReference type="neXtProt" id="NX_Q8TD20"/>
<dbReference type="OpenTargets" id="ENSG00000146411"/>
<dbReference type="PharmGKB" id="PA38288"/>
<dbReference type="VEuPathDB" id="HostDB:ENSG00000146411"/>
<dbReference type="eggNOG" id="KOG0254">
    <property type="taxonomic scope" value="Eukaryota"/>
</dbReference>
<dbReference type="GeneTree" id="ENSGT00940000159614"/>
<dbReference type="HOGENOM" id="CLU_001265_30_5_1"/>
<dbReference type="InParanoid" id="Q8TD20"/>
<dbReference type="OMA" id="TGSHMES"/>
<dbReference type="OrthoDB" id="4142200at2759"/>
<dbReference type="PAN-GO" id="Q8TD20">
    <property type="GO annotations" value="5 GO annotations based on evolutionary models"/>
</dbReference>
<dbReference type="PhylomeDB" id="Q8TD20"/>
<dbReference type="TreeFam" id="TF332408"/>
<dbReference type="PathwayCommons" id="Q8TD20"/>
<dbReference type="Reactome" id="R-HSA-189200">
    <property type="pathway name" value="Cellular hexose transport"/>
</dbReference>
<dbReference type="SignaLink" id="Q8TD20"/>
<dbReference type="BioGRID-ORCS" id="154091">
    <property type="hits" value="12 hits in 1158 CRISPR screens"/>
</dbReference>
<dbReference type="ChiTaRS" id="SLC2A12">
    <property type="organism name" value="human"/>
</dbReference>
<dbReference type="GeneWiki" id="SLC2A12"/>
<dbReference type="GenomeRNAi" id="154091"/>
<dbReference type="Pharos" id="Q8TD20">
    <property type="development level" value="Tbio"/>
</dbReference>
<dbReference type="PRO" id="PR:Q8TD20"/>
<dbReference type="Proteomes" id="UP000005640">
    <property type="component" value="Chromosome 6"/>
</dbReference>
<dbReference type="RNAct" id="Q8TD20">
    <property type="molecule type" value="protein"/>
</dbReference>
<dbReference type="Bgee" id="ENSG00000146411">
    <property type="expression patterns" value="Expressed in jejunal mucosa and 150 other cell types or tissues"/>
</dbReference>
<dbReference type="GO" id="GO:0012505">
    <property type="term" value="C:endomembrane system"/>
    <property type="evidence" value="ECO:0007669"/>
    <property type="project" value="UniProtKB-SubCell"/>
</dbReference>
<dbReference type="GO" id="GO:0016020">
    <property type="term" value="C:membrane"/>
    <property type="evidence" value="ECO:0000318"/>
    <property type="project" value="GO_Central"/>
</dbReference>
<dbReference type="GO" id="GO:0048471">
    <property type="term" value="C:perinuclear region of cytoplasm"/>
    <property type="evidence" value="ECO:0007669"/>
    <property type="project" value="UniProtKB-SubCell"/>
</dbReference>
<dbReference type="GO" id="GO:0005886">
    <property type="term" value="C:plasma membrane"/>
    <property type="evidence" value="ECO:0000304"/>
    <property type="project" value="Reactome"/>
</dbReference>
<dbReference type="GO" id="GO:0055056">
    <property type="term" value="F:D-glucose transmembrane transporter activity"/>
    <property type="evidence" value="ECO:0000318"/>
    <property type="project" value="GO_Central"/>
</dbReference>
<dbReference type="GO" id="GO:0072359">
    <property type="term" value="P:circulatory system development"/>
    <property type="evidence" value="ECO:0000318"/>
    <property type="project" value="GO_Central"/>
</dbReference>
<dbReference type="GO" id="GO:1904659">
    <property type="term" value="P:D-glucose transmembrane transport"/>
    <property type="evidence" value="ECO:0000318"/>
    <property type="project" value="GO_Central"/>
</dbReference>
<dbReference type="GO" id="GO:0008645">
    <property type="term" value="P:hexose transmembrane transport"/>
    <property type="evidence" value="ECO:0000304"/>
    <property type="project" value="Reactome"/>
</dbReference>
<dbReference type="CDD" id="cd17435">
    <property type="entry name" value="MFS_GLUT12_Class3"/>
    <property type="match status" value="1"/>
</dbReference>
<dbReference type="FunFam" id="1.20.1250.20:FF:000237">
    <property type="entry name" value="Solute carrier family 2 (Facilitated glucose transporter), member 12"/>
    <property type="match status" value="1"/>
</dbReference>
<dbReference type="FunFam" id="1.20.1250.20:FF:000124">
    <property type="entry name" value="Solute carrier family 2, facilitated glucose transporter member 12"/>
    <property type="match status" value="1"/>
</dbReference>
<dbReference type="Gene3D" id="1.20.1250.20">
    <property type="entry name" value="MFS general substrate transporter like domains"/>
    <property type="match status" value="2"/>
</dbReference>
<dbReference type="InterPro" id="IPR020846">
    <property type="entry name" value="MFS_dom"/>
</dbReference>
<dbReference type="InterPro" id="IPR005828">
    <property type="entry name" value="MFS_sugar_transport-like"/>
</dbReference>
<dbReference type="InterPro" id="IPR050820">
    <property type="entry name" value="MFS_Sugar_Transporter"/>
</dbReference>
<dbReference type="InterPro" id="IPR036259">
    <property type="entry name" value="MFS_trans_sf"/>
</dbReference>
<dbReference type="InterPro" id="IPR003663">
    <property type="entry name" value="Sugar/inositol_transpt"/>
</dbReference>
<dbReference type="InterPro" id="IPR005829">
    <property type="entry name" value="Sugar_transporter_CS"/>
</dbReference>
<dbReference type="PANTHER" id="PTHR48023">
    <property type="entry name" value="D-XYLOSE-PROTON SYMPORTER-LIKE 2"/>
    <property type="match status" value="1"/>
</dbReference>
<dbReference type="PANTHER" id="PTHR48023:SF2">
    <property type="entry name" value="SOLUTE CARRIER FAMILY 2, FACILITATED GLUCOSE TRANSPORTER MEMBER 12"/>
    <property type="match status" value="1"/>
</dbReference>
<dbReference type="Pfam" id="PF00083">
    <property type="entry name" value="Sugar_tr"/>
    <property type="match status" value="2"/>
</dbReference>
<dbReference type="PRINTS" id="PR00171">
    <property type="entry name" value="SUGRTRNSPORT"/>
</dbReference>
<dbReference type="SUPFAM" id="SSF103473">
    <property type="entry name" value="MFS general substrate transporter"/>
    <property type="match status" value="1"/>
</dbReference>
<dbReference type="PROSITE" id="PS50850">
    <property type="entry name" value="MFS"/>
    <property type="match status" value="1"/>
</dbReference>
<dbReference type="PROSITE" id="PS00216">
    <property type="entry name" value="SUGAR_TRANSPORT_1"/>
    <property type="match status" value="1"/>
</dbReference>
<sequence>MVPVENTEGPSLLNQKGTAVETEGSGSRHPPWARGCGMFTFLSSVTAAVSGLLVGYELGIISGALLQIKTLLALSCHEQEMVVSSLVIGALLASLTGGVLIDRYGRRTAIILSSCLLGLGSLVLILSLSYTVLIVGRIAIGVSISLSSIATCVYIAEIAPQHRRGLLVSLNELMIVIGILSAYISNYAFANVFHGWKYMFGLVIPLGVLQAIAMYFLPPSPRFLVMKGQEGAASKVLGRLRALSDTTEELTVIKSSLKDEYQYSFWDLFRSKDNMRTRIMIGLTLVFFVQITGQPNILFYASTVLKSVGFQSNEAASLASTGVGVVKVISTIPATLLVDHVGSKTFLCIGSSVMAASLVTMGIVNLNIHMNFTHICRSHNSINQSLDESVIYGPGNLSTNNNTLRDHFKGISSHSRSSLMPLRNDVDKRGETTSASLLNAGLSHTEYQIVTDPGDVPAFLKWLSLASLLVYVAAFSIGLGPMPWLVLSEIFPGGIRGRAMALTSSMNWGINLLISLTFLTVTDLIGLPWVCFIYTIMSLASLLFVVMFIPETKGCSLEQISMELAKVNYVKNNICFMSHHQEELVPKQPQKRKPQEQLLECNKLCGRGQSRQLSPET</sequence>
<keyword id="KW-1003">Cell membrane</keyword>
<keyword id="KW-0963">Cytoplasm</keyword>
<keyword id="KW-0325">Glycoprotein</keyword>
<keyword id="KW-0472">Membrane</keyword>
<keyword id="KW-1267">Proteomics identification</keyword>
<keyword id="KW-1185">Reference proteome</keyword>
<keyword id="KW-0762">Sugar transport</keyword>
<keyword id="KW-0812">Transmembrane</keyword>
<keyword id="KW-1133">Transmembrane helix</keyword>
<keyword id="KW-0813">Transport</keyword>
<protein>
    <recommendedName>
        <fullName evidence="7">Solute carrier family 2, facilitated glucose transporter member 12</fullName>
    </recommendedName>
    <alternativeName>
        <fullName evidence="6">Glucose transporter type 12</fullName>
        <shortName evidence="6">GLUT-12</shortName>
    </alternativeName>
</protein>
<reference key="1">
    <citation type="journal article" date="2002" name="Am. J. Physiol.">
        <title>Identification of a novel glucose transporter-like protein -- GLUT-12.</title>
        <authorList>
            <person name="Rogers S."/>
            <person name="Macheda M.L."/>
            <person name="Docherty S.E."/>
            <person name="Carty M.D."/>
            <person name="Henderson M.A."/>
            <person name="Soeller W.C."/>
            <person name="Gibbs E.M."/>
            <person name="James D.E."/>
            <person name="Best J.D."/>
        </authorList>
    </citation>
    <scope>NUCLEOTIDE SEQUENCE [MRNA]</scope>
    <scope>SUBCELLULAR LOCATION</scope>
    <scope>TISSUE SPECIFICITY</scope>
</reference>
<reference key="2">
    <citation type="journal article" date="2004" name="Nat. Genet.">
        <title>Complete sequencing and characterization of 21,243 full-length human cDNAs.</title>
        <authorList>
            <person name="Ota T."/>
            <person name="Suzuki Y."/>
            <person name="Nishikawa T."/>
            <person name="Otsuki T."/>
            <person name="Sugiyama T."/>
            <person name="Irie R."/>
            <person name="Wakamatsu A."/>
            <person name="Hayashi K."/>
            <person name="Sato H."/>
            <person name="Nagai K."/>
            <person name="Kimura K."/>
            <person name="Makita H."/>
            <person name="Sekine M."/>
            <person name="Obayashi M."/>
            <person name="Nishi T."/>
            <person name="Shibahara T."/>
            <person name="Tanaka T."/>
            <person name="Ishii S."/>
            <person name="Yamamoto J."/>
            <person name="Saito K."/>
            <person name="Kawai Y."/>
            <person name="Isono Y."/>
            <person name="Nakamura Y."/>
            <person name="Nagahari K."/>
            <person name="Murakami K."/>
            <person name="Yasuda T."/>
            <person name="Iwayanagi T."/>
            <person name="Wagatsuma M."/>
            <person name="Shiratori A."/>
            <person name="Sudo H."/>
            <person name="Hosoiri T."/>
            <person name="Kaku Y."/>
            <person name="Kodaira H."/>
            <person name="Kondo H."/>
            <person name="Sugawara M."/>
            <person name="Takahashi M."/>
            <person name="Kanda K."/>
            <person name="Yokoi T."/>
            <person name="Furuya T."/>
            <person name="Kikkawa E."/>
            <person name="Omura Y."/>
            <person name="Abe K."/>
            <person name="Kamihara K."/>
            <person name="Katsuta N."/>
            <person name="Sato K."/>
            <person name="Tanikawa M."/>
            <person name="Yamazaki M."/>
            <person name="Ninomiya K."/>
            <person name="Ishibashi T."/>
            <person name="Yamashita H."/>
            <person name="Murakawa K."/>
            <person name="Fujimori K."/>
            <person name="Tanai H."/>
            <person name="Kimata M."/>
            <person name="Watanabe M."/>
            <person name="Hiraoka S."/>
            <person name="Chiba Y."/>
            <person name="Ishida S."/>
            <person name="Ono Y."/>
            <person name="Takiguchi S."/>
            <person name="Watanabe S."/>
            <person name="Yosida M."/>
            <person name="Hotuta T."/>
            <person name="Kusano J."/>
            <person name="Kanehori K."/>
            <person name="Takahashi-Fujii A."/>
            <person name="Hara H."/>
            <person name="Tanase T.-O."/>
            <person name="Nomura Y."/>
            <person name="Togiya S."/>
            <person name="Komai F."/>
            <person name="Hara R."/>
            <person name="Takeuchi K."/>
            <person name="Arita M."/>
            <person name="Imose N."/>
            <person name="Musashino K."/>
            <person name="Yuuki H."/>
            <person name="Oshima A."/>
            <person name="Sasaki N."/>
            <person name="Aotsuka S."/>
            <person name="Yoshikawa Y."/>
            <person name="Matsunawa H."/>
            <person name="Ichihara T."/>
            <person name="Shiohata N."/>
            <person name="Sano S."/>
            <person name="Moriya S."/>
            <person name="Momiyama H."/>
            <person name="Satoh N."/>
            <person name="Takami S."/>
            <person name="Terashima Y."/>
            <person name="Suzuki O."/>
            <person name="Nakagawa S."/>
            <person name="Senoh A."/>
            <person name="Mizoguchi H."/>
            <person name="Goto Y."/>
            <person name="Shimizu F."/>
            <person name="Wakebe H."/>
            <person name="Hishigaki H."/>
            <person name="Watanabe T."/>
            <person name="Sugiyama A."/>
            <person name="Takemoto M."/>
            <person name="Kawakami B."/>
            <person name="Yamazaki M."/>
            <person name="Watanabe K."/>
            <person name="Kumagai A."/>
            <person name="Itakura S."/>
            <person name="Fukuzumi Y."/>
            <person name="Fujimori Y."/>
            <person name="Komiyama M."/>
            <person name="Tashiro H."/>
            <person name="Tanigami A."/>
            <person name="Fujiwara T."/>
            <person name="Ono T."/>
            <person name="Yamada K."/>
            <person name="Fujii Y."/>
            <person name="Ozaki K."/>
            <person name="Hirao M."/>
            <person name="Ohmori Y."/>
            <person name="Kawabata A."/>
            <person name="Hikiji T."/>
            <person name="Kobatake N."/>
            <person name="Inagaki H."/>
            <person name="Ikema Y."/>
            <person name="Okamoto S."/>
            <person name="Okitani R."/>
            <person name="Kawakami T."/>
            <person name="Noguchi S."/>
            <person name="Itoh T."/>
            <person name="Shigeta K."/>
            <person name="Senba T."/>
            <person name="Matsumura K."/>
            <person name="Nakajima Y."/>
            <person name="Mizuno T."/>
            <person name="Morinaga M."/>
            <person name="Sasaki M."/>
            <person name="Togashi T."/>
            <person name="Oyama M."/>
            <person name="Hata H."/>
            <person name="Watanabe M."/>
            <person name="Komatsu T."/>
            <person name="Mizushima-Sugano J."/>
            <person name="Satoh T."/>
            <person name="Shirai Y."/>
            <person name="Takahashi Y."/>
            <person name="Nakagawa K."/>
            <person name="Okumura K."/>
            <person name="Nagase T."/>
            <person name="Nomura N."/>
            <person name="Kikuchi H."/>
            <person name="Masuho Y."/>
            <person name="Yamashita R."/>
            <person name="Nakai K."/>
            <person name="Yada T."/>
            <person name="Nakamura Y."/>
            <person name="Ohara O."/>
            <person name="Isogai T."/>
            <person name="Sugano S."/>
        </authorList>
    </citation>
    <scope>NUCLEOTIDE SEQUENCE [LARGE SCALE MRNA]</scope>
</reference>
<reference key="3">
    <citation type="journal article" date="2003" name="Nature">
        <title>The DNA sequence and analysis of human chromosome 6.</title>
        <authorList>
            <person name="Mungall A.J."/>
            <person name="Palmer S.A."/>
            <person name="Sims S.K."/>
            <person name="Edwards C.A."/>
            <person name="Ashurst J.L."/>
            <person name="Wilming L."/>
            <person name="Jones M.C."/>
            <person name="Horton R."/>
            <person name="Hunt S.E."/>
            <person name="Scott C.E."/>
            <person name="Gilbert J.G.R."/>
            <person name="Clamp M.E."/>
            <person name="Bethel G."/>
            <person name="Milne S."/>
            <person name="Ainscough R."/>
            <person name="Almeida J.P."/>
            <person name="Ambrose K.D."/>
            <person name="Andrews T.D."/>
            <person name="Ashwell R.I.S."/>
            <person name="Babbage A.K."/>
            <person name="Bagguley C.L."/>
            <person name="Bailey J."/>
            <person name="Banerjee R."/>
            <person name="Barker D.J."/>
            <person name="Barlow K.F."/>
            <person name="Bates K."/>
            <person name="Beare D.M."/>
            <person name="Beasley H."/>
            <person name="Beasley O."/>
            <person name="Bird C.P."/>
            <person name="Blakey S.E."/>
            <person name="Bray-Allen S."/>
            <person name="Brook J."/>
            <person name="Brown A.J."/>
            <person name="Brown J.Y."/>
            <person name="Burford D.C."/>
            <person name="Burrill W."/>
            <person name="Burton J."/>
            <person name="Carder C."/>
            <person name="Carter N.P."/>
            <person name="Chapman J.C."/>
            <person name="Clark S.Y."/>
            <person name="Clark G."/>
            <person name="Clee C.M."/>
            <person name="Clegg S."/>
            <person name="Cobley V."/>
            <person name="Collier R.E."/>
            <person name="Collins J.E."/>
            <person name="Colman L.K."/>
            <person name="Corby N.R."/>
            <person name="Coville G.J."/>
            <person name="Culley K.M."/>
            <person name="Dhami P."/>
            <person name="Davies J."/>
            <person name="Dunn M."/>
            <person name="Earthrowl M.E."/>
            <person name="Ellington A.E."/>
            <person name="Evans K.A."/>
            <person name="Faulkner L."/>
            <person name="Francis M.D."/>
            <person name="Frankish A."/>
            <person name="Frankland J."/>
            <person name="French L."/>
            <person name="Garner P."/>
            <person name="Garnett J."/>
            <person name="Ghori M.J."/>
            <person name="Gilby L.M."/>
            <person name="Gillson C.J."/>
            <person name="Glithero R.J."/>
            <person name="Grafham D.V."/>
            <person name="Grant M."/>
            <person name="Gribble S."/>
            <person name="Griffiths C."/>
            <person name="Griffiths M.N.D."/>
            <person name="Hall R."/>
            <person name="Halls K.S."/>
            <person name="Hammond S."/>
            <person name="Harley J.L."/>
            <person name="Hart E.A."/>
            <person name="Heath P.D."/>
            <person name="Heathcott R."/>
            <person name="Holmes S.J."/>
            <person name="Howden P.J."/>
            <person name="Howe K.L."/>
            <person name="Howell G.R."/>
            <person name="Huckle E."/>
            <person name="Humphray S.J."/>
            <person name="Humphries M.D."/>
            <person name="Hunt A.R."/>
            <person name="Johnson C.M."/>
            <person name="Joy A.A."/>
            <person name="Kay M."/>
            <person name="Keenan S.J."/>
            <person name="Kimberley A.M."/>
            <person name="King A."/>
            <person name="Laird G.K."/>
            <person name="Langford C."/>
            <person name="Lawlor S."/>
            <person name="Leongamornlert D.A."/>
            <person name="Leversha M."/>
            <person name="Lloyd C.R."/>
            <person name="Lloyd D.M."/>
            <person name="Loveland J.E."/>
            <person name="Lovell J."/>
            <person name="Martin S."/>
            <person name="Mashreghi-Mohammadi M."/>
            <person name="Maslen G.L."/>
            <person name="Matthews L."/>
            <person name="McCann O.T."/>
            <person name="McLaren S.J."/>
            <person name="McLay K."/>
            <person name="McMurray A."/>
            <person name="Moore M.J.F."/>
            <person name="Mullikin J.C."/>
            <person name="Niblett D."/>
            <person name="Nickerson T."/>
            <person name="Novik K.L."/>
            <person name="Oliver K."/>
            <person name="Overton-Larty E.K."/>
            <person name="Parker A."/>
            <person name="Patel R."/>
            <person name="Pearce A.V."/>
            <person name="Peck A.I."/>
            <person name="Phillimore B.J.C.T."/>
            <person name="Phillips S."/>
            <person name="Plumb R.W."/>
            <person name="Porter K.M."/>
            <person name="Ramsey Y."/>
            <person name="Ranby S.A."/>
            <person name="Rice C.M."/>
            <person name="Ross M.T."/>
            <person name="Searle S.M."/>
            <person name="Sehra H.K."/>
            <person name="Sheridan E."/>
            <person name="Skuce C.D."/>
            <person name="Smith S."/>
            <person name="Smith M."/>
            <person name="Spraggon L."/>
            <person name="Squares S.L."/>
            <person name="Steward C.A."/>
            <person name="Sycamore N."/>
            <person name="Tamlyn-Hall G."/>
            <person name="Tester J."/>
            <person name="Theaker A.J."/>
            <person name="Thomas D.W."/>
            <person name="Thorpe A."/>
            <person name="Tracey A."/>
            <person name="Tromans A."/>
            <person name="Tubby B."/>
            <person name="Wall M."/>
            <person name="Wallis J.M."/>
            <person name="West A.P."/>
            <person name="White S.S."/>
            <person name="Whitehead S.L."/>
            <person name="Whittaker H."/>
            <person name="Wild A."/>
            <person name="Willey D.J."/>
            <person name="Wilmer T.E."/>
            <person name="Wood J.M."/>
            <person name="Wray P.W."/>
            <person name="Wyatt J.C."/>
            <person name="Young L."/>
            <person name="Younger R.M."/>
            <person name="Bentley D.R."/>
            <person name="Coulson A."/>
            <person name="Durbin R.M."/>
            <person name="Hubbard T."/>
            <person name="Sulston J.E."/>
            <person name="Dunham I."/>
            <person name="Rogers J."/>
            <person name="Beck S."/>
        </authorList>
    </citation>
    <scope>NUCLEOTIDE SEQUENCE [LARGE SCALE GENOMIC DNA]</scope>
</reference>
<reference key="4">
    <citation type="submission" date="2005-09" db="EMBL/GenBank/DDBJ databases">
        <authorList>
            <person name="Mural R.J."/>
            <person name="Istrail S."/>
            <person name="Sutton G.G."/>
            <person name="Florea L."/>
            <person name="Halpern A.L."/>
            <person name="Mobarry C.M."/>
            <person name="Lippert R."/>
            <person name="Walenz B."/>
            <person name="Shatkay H."/>
            <person name="Dew I."/>
            <person name="Miller J.R."/>
            <person name="Flanigan M.J."/>
            <person name="Edwards N.J."/>
            <person name="Bolanos R."/>
            <person name="Fasulo D."/>
            <person name="Halldorsson B.V."/>
            <person name="Hannenhalli S."/>
            <person name="Turner R."/>
            <person name="Yooseph S."/>
            <person name="Lu F."/>
            <person name="Nusskern D.R."/>
            <person name="Shue B.C."/>
            <person name="Zheng X.H."/>
            <person name="Zhong F."/>
            <person name="Delcher A.L."/>
            <person name="Huson D.H."/>
            <person name="Kravitz S.A."/>
            <person name="Mouchard L."/>
            <person name="Reinert K."/>
            <person name="Remington K.A."/>
            <person name="Clark A.G."/>
            <person name="Waterman M.S."/>
            <person name="Eichler E.E."/>
            <person name="Adams M.D."/>
            <person name="Hunkapiller M.W."/>
            <person name="Myers E.W."/>
            <person name="Venter J.C."/>
        </authorList>
    </citation>
    <scope>NUCLEOTIDE SEQUENCE [LARGE SCALE GENOMIC DNA]</scope>
</reference>
<reference key="5">
    <citation type="journal article" date="2004" name="Genome Res.">
        <title>The status, quality, and expansion of the NIH full-length cDNA project: the Mammalian Gene Collection (MGC).</title>
        <authorList>
            <consortium name="The MGC Project Team"/>
        </authorList>
    </citation>
    <scope>NUCLEOTIDE SEQUENCE [LARGE SCALE MRNA]</scope>
    <source>
        <tissue>Meninges</tissue>
        <tissue>Skin</tissue>
    </source>
</reference>
<feature type="chain" id="PRO_0000292014" description="Solute carrier family 2, facilitated glucose transporter member 12">
    <location>
        <begin position="1"/>
        <end position="617"/>
    </location>
</feature>
<feature type="topological domain" description="Cytoplasmic" evidence="3">
    <location>
        <begin position="1"/>
        <end position="44"/>
    </location>
</feature>
<feature type="transmembrane region" description="Helical" evidence="3">
    <location>
        <begin position="45"/>
        <end position="65"/>
    </location>
</feature>
<feature type="topological domain" description="Extracellular" evidence="3">
    <location>
        <begin position="66"/>
        <end position="80"/>
    </location>
</feature>
<feature type="transmembrane region" description="Helical" evidence="3">
    <location>
        <begin position="81"/>
        <end position="101"/>
    </location>
</feature>
<feature type="topological domain" description="Cytoplasmic" evidence="3">
    <location>
        <begin position="102"/>
        <end position="115"/>
    </location>
</feature>
<feature type="transmembrane region" description="Helical" evidence="3">
    <location>
        <begin position="116"/>
        <end position="136"/>
    </location>
</feature>
<feature type="topological domain" description="Extracellular" evidence="3">
    <location>
        <position position="137"/>
    </location>
</feature>
<feature type="transmembrane region" description="Helical" evidence="3">
    <location>
        <begin position="138"/>
        <end position="158"/>
    </location>
</feature>
<feature type="topological domain" description="Cytoplasmic" evidence="3">
    <location>
        <begin position="159"/>
        <end position="172"/>
    </location>
</feature>
<feature type="transmembrane region" description="Helical" evidence="3">
    <location>
        <begin position="173"/>
        <end position="193"/>
    </location>
</feature>
<feature type="topological domain" description="Extracellular" evidence="3">
    <location>
        <begin position="194"/>
        <end position="197"/>
    </location>
</feature>
<feature type="transmembrane region" description="Helical" evidence="3">
    <location>
        <begin position="198"/>
        <end position="218"/>
    </location>
</feature>
<feature type="topological domain" description="Cytoplasmic" evidence="3">
    <location>
        <begin position="219"/>
        <end position="278"/>
    </location>
</feature>
<feature type="transmembrane region" description="Helical" evidence="3">
    <location>
        <begin position="279"/>
        <end position="299"/>
    </location>
</feature>
<feature type="topological domain" description="Extracellular" evidence="3">
    <location>
        <begin position="300"/>
        <end position="317"/>
    </location>
</feature>
<feature type="transmembrane region" description="Helical" evidence="3">
    <location>
        <begin position="318"/>
        <end position="338"/>
    </location>
</feature>
<feature type="topological domain" description="Cytoplasmic" evidence="3">
    <location>
        <begin position="339"/>
        <end position="345"/>
    </location>
</feature>
<feature type="transmembrane region" description="Helical" evidence="3">
    <location>
        <begin position="346"/>
        <end position="366"/>
    </location>
</feature>
<feature type="topological domain" description="Extracellular" evidence="3">
    <location>
        <begin position="367"/>
        <end position="466"/>
    </location>
</feature>
<feature type="transmembrane region" description="Helical" evidence="3">
    <location>
        <begin position="467"/>
        <end position="487"/>
    </location>
</feature>
<feature type="topological domain" description="Cytoplasmic" evidence="3">
    <location>
        <begin position="488"/>
        <end position="498"/>
    </location>
</feature>
<feature type="transmembrane region" description="Helical" evidence="3">
    <location>
        <begin position="499"/>
        <end position="519"/>
    </location>
</feature>
<feature type="topological domain" description="Extracellular" evidence="3">
    <location>
        <begin position="520"/>
        <end position="528"/>
    </location>
</feature>
<feature type="transmembrane region" description="Helical" evidence="3">
    <location>
        <begin position="529"/>
        <end position="549"/>
    </location>
</feature>
<feature type="topological domain" description="Cytoplasmic" evidence="3">
    <location>
        <begin position="550"/>
        <end position="617"/>
    </location>
</feature>
<feature type="region of interest" description="Disordered" evidence="4">
    <location>
        <begin position="1"/>
        <end position="29"/>
    </location>
</feature>
<feature type="compositionally biased region" description="Polar residues" evidence="4">
    <location>
        <begin position="8"/>
        <end position="17"/>
    </location>
</feature>
<feature type="glycosylation site" description="N-linked (GlcNAc...) asparagine" evidence="3">
    <location>
        <position position="371"/>
    </location>
</feature>
<feature type="glycosylation site" description="N-linked (GlcNAc...) asparagine" evidence="3">
    <location>
        <position position="383"/>
    </location>
</feature>
<feature type="glycosylation site" description="N-linked (GlcNAc...) asparagine" evidence="3">
    <location>
        <position position="396"/>
    </location>
</feature>
<feature type="glycosylation site" description="N-linked (GlcNAc...) asparagine" evidence="3">
    <location>
        <position position="401"/>
    </location>
</feature>
<name>GTR12_HUMAN</name>